<sequence>MYPGSGNYSYNNRPSMPPPGFNGDGQGYRQEYGNQYGGGYQQQQYQDQYQGENRGQYQGQYQDQPEYGRPPSGMVRPPSSIQQGNGQQFQYSQMTGRRKALLIGINYIGSKNALRGCINDAHNIFNYLTTYCGYRPEDIVMLTDDQREMVKIPLKENIIRAMQWLVKDAQPNDALFFHYSGHGGQTKDLDGDEEDGMDDVIYPVDFESVGPLIDDTMHDIMVKSLPQGARLTALFDSCHSGTVLDLPYTYSTKGVIKEPNMWKDVGSDGIQAAMAYATGNRSALFSSIGNMVSSVTKKQNVDRERVRQIKFSPADVIMLSGSKDNQTSADTFADGQNIGAMSHAFISVMTRQPQQSYLSLLQNLRNELAGKYSQKPQLSASHPIDVNLQFIM</sequence>
<proteinExistence type="evidence at protein level"/>
<protein>
    <recommendedName>
        <fullName>Metacaspase-1</fullName>
        <ecNumber>3.4.22.-</ecNumber>
    </recommendedName>
</protein>
<keyword id="KW-0002">3D-structure</keyword>
<keyword id="KW-0053">Apoptosis</keyword>
<keyword id="KW-0378">Hydrolase</keyword>
<keyword id="KW-0645">Protease</keyword>
<keyword id="KW-1185">Reference proteome</keyword>
<keyword id="KW-0788">Thiol protease</keyword>
<keyword id="KW-0865">Zymogen</keyword>
<reference key="1">
    <citation type="journal article" date="2004" name="Nature">
        <title>Genome evolution in yeasts.</title>
        <authorList>
            <person name="Dujon B."/>
            <person name="Sherman D."/>
            <person name="Fischer G."/>
            <person name="Durrens P."/>
            <person name="Casaregola S."/>
            <person name="Lafontaine I."/>
            <person name="de Montigny J."/>
            <person name="Marck C."/>
            <person name="Neuveglise C."/>
            <person name="Talla E."/>
            <person name="Goffard N."/>
            <person name="Frangeul L."/>
            <person name="Aigle M."/>
            <person name="Anthouard V."/>
            <person name="Babour A."/>
            <person name="Barbe V."/>
            <person name="Barnay S."/>
            <person name="Blanchin S."/>
            <person name="Beckerich J.-M."/>
            <person name="Beyne E."/>
            <person name="Bleykasten C."/>
            <person name="Boisrame A."/>
            <person name="Boyer J."/>
            <person name="Cattolico L."/>
            <person name="Confanioleri F."/>
            <person name="de Daruvar A."/>
            <person name="Despons L."/>
            <person name="Fabre E."/>
            <person name="Fairhead C."/>
            <person name="Ferry-Dumazet H."/>
            <person name="Groppi A."/>
            <person name="Hantraye F."/>
            <person name="Hennequin C."/>
            <person name="Jauniaux N."/>
            <person name="Joyet P."/>
            <person name="Kachouri R."/>
            <person name="Kerrest A."/>
            <person name="Koszul R."/>
            <person name="Lemaire M."/>
            <person name="Lesur I."/>
            <person name="Ma L."/>
            <person name="Muller H."/>
            <person name="Nicaud J.-M."/>
            <person name="Nikolski M."/>
            <person name="Oztas S."/>
            <person name="Ozier-Kalogeropoulos O."/>
            <person name="Pellenz S."/>
            <person name="Potier S."/>
            <person name="Richard G.-F."/>
            <person name="Straub M.-L."/>
            <person name="Suleau A."/>
            <person name="Swennen D."/>
            <person name="Tekaia F."/>
            <person name="Wesolowski-Louvel M."/>
            <person name="Westhof E."/>
            <person name="Wirth B."/>
            <person name="Zeniou-Meyer M."/>
            <person name="Zivanovic Y."/>
            <person name="Bolotin-Fukuhara M."/>
            <person name="Thierry A."/>
            <person name="Bouchier C."/>
            <person name="Caudron B."/>
            <person name="Scarpelli C."/>
            <person name="Gaillardin C."/>
            <person name="Weissenbach J."/>
            <person name="Wincker P."/>
            <person name="Souciet J.-L."/>
        </authorList>
    </citation>
    <scope>NUCLEOTIDE SEQUENCE [LARGE SCALE GENOMIC DNA]</scope>
    <source>
        <strain>ATCC 2001 / BCRC 20586 / JCM 3761 / NBRC 0622 / NRRL Y-65 / CBS 138</strain>
    </source>
</reference>
<accession>Q6FPX9</accession>
<evidence type="ECO:0000250" key="1"/>
<evidence type="ECO:0000255" key="2"/>
<evidence type="ECO:0000256" key="3">
    <source>
        <dbReference type="SAM" id="MobiDB-lite"/>
    </source>
</evidence>
<evidence type="ECO:0000305" key="4"/>
<evidence type="ECO:0007829" key="5">
    <source>
        <dbReference type="PDB" id="7QP0"/>
    </source>
</evidence>
<evidence type="ECO:0007829" key="6">
    <source>
        <dbReference type="PDB" id="7QP1"/>
    </source>
</evidence>
<gene>
    <name type="primary">MCA1</name>
    <name type="ordered locus">CAGL0I10945g</name>
</gene>
<comment type="function">
    <text evidence="1">Involved in cell death (apoptosis).</text>
</comment>
<comment type="similarity">
    <text evidence="4">Belongs to the peptidase C14B family.</text>
</comment>
<feature type="propeptide" id="PRO_0000333640" evidence="2">
    <location>
        <begin position="1"/>
        <end status="unknown"/>
    </location>
</feature>
<feature type="chain" id="PRO_0000333641" description="Metacaspase-1">
    <location>
        <begin status="unknown"/>
        <end position="392"/>
    </location>
</feature>
<feature type="region of interest" description="Disordered" evidence="3">
    <location>
        <begin position="1"/>
        <end position="87"/>
    </location>
</feature>
<feature type="compositionally biased region" description="Polar residues" evidence="3">
    <location>
        <begin position="1"/>
        <end position="14"/>
    </location>
</feature>
<feature type="compositionally biased region" description="Low complexity" evidence="3">
    <location>
        <begin position="41"/>
        <end position="51"/>
    </location>
</feature>
<feature type="compositionally biased region" description="Polar residues" evidence="3">
    <location>
        <begin position="53"/>
        <end position="63"/>
    </location>
</feature>
<feature type="active site" evidence="1">
    <location>
        <position position="182"/>
    </location>
</feature>
<feature type="active site" evidence="1">
    <location>
        <position position="238"/>
    </location>
</feature>
<feature type="strand" evidence="6">
    <location>
        <begin position="79"/>
        <end position="82"/>
    </location>
</feature>
<feature type="strand" evidence="5">
    <location>
        <begin position="98"/>
        <end position="104"/>
    </location>
</feature>
<feature type="helix" evidence="5">
    <location>
        <begin position="117"/>
        <end position="131"/>
    </location>
</feature>
<feature type="helix" evidence="5">
    <location>
        <begin position="136"/>
        <end position="138"/>
    </location>
</feature>
<feature type="strand" evidence="5">
    <location>
        <begin position="139"/>
        <end position="143"/>
    </location>
</feature>
<feature type="strand" evidence="5">
    <location>
        <begin position="146"/>
        <end position="148"/>
    </location>
</feature>
<feature type="helix" evidence="5">
    <location>
        <begin position="149"/>
        <end position="151"/>
    </location>
</feature>
<feature type="helix" evidence="5">
    <location>
        <begin position="155"/>
        <end position="166"/>
    </location>
</feature>
<feature type="strand" evidence="5">
    <location>
        <begin position="174"/>
        <end position="181"/>
    </location>
</feature>
<feature type="strand" evidence="5">
    <location>
        <begin position="183"/>
        <end position="187"/>
    </location>
</feature>
<feature type="strand" evidence="5">
    <location>
        <begin position="191"/>
        <end position="193"/>
    </location>
</feature>
<feature type="strand" evidence="5">
    <location>
        <begin position="197"/>
        <end position="201"/>
    </location>
</feature>
<feature type="helix" evidence="5">
    <location>
        <begin position="206"/>
        <end position="209"/>
    </location>
</feature>
<feature type="helix" evidence="5">
    <location>
        <begin position="214"/>
        <end position="221"/>
    </location>
</feature>
<feature type="turn" evidence="5">
    <location>
        <begin position="222"/>
        <end position="224"/>
    </location>
</feature>
<feature type="strand" evidence="5">
    <location>
        <begin position="230"/>
        <end position="237"/>
    </location>
</feature>
<feature type="helix" evidence="5">
    <location>
        <begin position="241"/>
        <end position="244"/>
    </location>
</feature>
<feature type="strand" evidence="5">
    <location>
        <begin position="248"/>
        <end position="251"/>
    </location>
</feature>
<feature type="strand" evidence="5">
    <location>
        <begin position="254"/>
        <end position="257"/>
    </location>
</feature>
<feature type="strand" evidence="5">
    <location>
        <begin position="314"/>
        <end position="321"/>
    </location>
</feature>
<feature type="turn" evidence="5">
    <location>
        <begin position="330"/>
        <end position="333"/>
    </location>
</feature>
<feature type="helix" evidence="5">
    <location>
        <begin position="335"/>
        <end position="337"/>
    </location>
</feature>
<feature type="helix" evidence="5">
    <location>
        <begin position="340"/>
        <end position="351"/>
    </location>
</feature>
<feature type="helix" evidence="5">
    <location>
        <begin position="357"/>
        <end position="368"/>
    </location>
</feature>
<feature type="turn" evidence="5">
    <location>
        <begin position="369"/>
        <end position="371"/>
    </location>
</feature>
<feature type="strand" evidence="5">
    <location>
        <begin position="376"/>
        <end position="382"/>
    </location>
</feature>
<name>MCA1_CANGA</name>
<organism>
    <name type="scientific">Candida glabrata (strain ATCC 2001 / BCRC 20586 / JCM 3761 / NBRC 0622 / NRRL Y-65 / CBS 138)</name>
    <name type="common">Yeast</name>
    <name type="synonym">Nakaseomyces glabratus</name>
    <dbReference type="NCBI Taxonomy" id="284593"/>
    <lineage>
        <taxon>Eukaryota</taxon>
        <taxon>Fungi</taxon>
        <taxon>Dikarya</taxon>
        <taxon>Ascomycota</taxon>
        <taxon>Saccharomycotina</taxon>
        <taxon>Saccharomycetes</taxon>
        <taxon>Saccharomycetales</taxon>
        <taxon>Saccharomycetaceae</taxon>
        <taxon>Nakaseomyces</taxon>
    </lineage>
</organism>
<dbReference type="EC" id="3.4.22.-"/>
<dbReference type="EMBL" id="CR380955">
    <property type="protein sequence ID" value="CAG60660.1"/>
    <property type="molecule type" value="Genomic_DNA"/>
</dbReference>
<dbReference type="PDB" id="7QP0">
    <property type="method" value="X-ray"/>
    <property type="resolution" value="1.60 A"/>
    <property type="chains" value="A/B=1-392"/>
</dbReference>
<dbReference type="PDB" id="7QP1">
    <property type="method" value="X-ray"/>
    <property type="resolution" value="3.00 A"/>
    <property type="chains" value="A/B=1-392"/>
</dbReference>
<dbReference type="PDBsum" id="7QP0"/>
<dbReference type="PDBsum" id="7QP1"/>
<dbReference type="SASBDB" id="Q6FPX9"/>
<dbReference type="SMR" id="Q6FPX9"/>
<dbReference type="FunCoup" id="Q6FPX9">
    <property type="interactions" value="395"/>
</dbReference>
<dbReference type="STRING" id="284593.Q6FPX9"/>
<dbReference type="MEROPS" id="C14.035"/>
<dbReference type="EnsemblFungi" id="CAGL0I10945g-T">
    <property type="protein sequence ID" value="CAGL0I10945g-T-p1"/>
    <property type="gene ID" value="CAGL0I10945g"/>
</dbReference>
<dbReference type="KEGG" id="cgr:2889355"/>
<dbReference type="CGD" id="CAL0132628">
    <property type="gene designation" value="YCA1"/>
</dbReference>
<dbReference type="VEuPathDB" id="FungiDB:CAGL0I10945g"/>
<dbReference type="eggNOG" id="KOG1546">
    <property type="taxonomic scope" value="Eukaryota"/>
</dbReference>
<dbReference type="HOGENOM" id="CLU_029389_3_1_1"/>
<dbReference type="InParanoid" id="Q6FPX9"/>
<dbReference type="OMA" id="DEMHNIM"/>
<dbReference type="Proteomes" id="UP000002428">
    <property type="component" value="Chromosome I"/>
</dbReference>
<dbReference type="GO" id="GO:0005829">
    <property type="term" value="C:cytosol"/>
    <property type="evidence" value="ECO:0007669"/>
    <property type="project" value="EnsemblFungi"/>
</dbReference>
<dbReference type="GO" id="GO:0005634">
    <property type="term" value="C:nucleus"/>
    <property type="evidence" value="ECO:0007669"/>
    <property type="project" value="EnsemblFungi"/>
</dbReference>
<dbReference type="GO" id="GO:0004198">
    <property type="term" value="F:calcium-dependent cysteine-type endopeptidase activity"/>
    <property type="evidence" value="ECO:0007669"/>
    <property type="project" value="EnsemblFungi"/>
</dbReference>
<dbReference type="GO" id="GO:0006915">
    <property type="term" value="P:apoptotic process"/>
    <property type="evidence" value="ECO:0007669"/>
    <property type="project" value="UniProtKB-KW"/>
</dbReference>
<dbReference type="GO" id="GO:0006515">
    <property type="term" value="P:protein quality control for misfolded or incompletely synthesized proteins"/>
    <property type="evidence" value="ECO:0007669"/>
    <property type="project" value="EnsemblFungi"/>
</dbReference>
<dbReference type="FunFam" id="3.40.50.12660:FF:000005">
    <property type="entry name" value="Mca1p"/>
    <property type="match status" value="1"/>
</dbReference>
<dbReference type="Gene3D" id="3.40.50.12660">
    <property type="match status" value="1"/>
</dbReference>
<dbReference type="InterPro" id="IPR029030">
    <property type="entry name" value="Caspase-like_dom_sf"/>
</dbReference>
<dbReference type="InterPro" id="IPR050452">
    <property type="entry name" value="Metacaspase"/>
</dbReference>
<dbReference type="InterPro" id="IPR011600">
    <property type="entry name" value="Pept_C14_caspase"/>
</dbReference>
<dbReference type="PANTHER" id="PTHR48104:SF30">
    <property type="entry name" value="METACASPASE-1"/>
    <property type="match status" value="1"/>
</dbReference>
<dbReference type="PANTHER" id="PTHR48104">
    <property type="entry name" value="METACASPASE-4"/>
    <property type="match status" value="1"/>
</dbReference>
<dbReference type="Pfam" id="PF00656">
    <property type="entry name" value="Peptidase_C14"/>
    <property type="match status" value="1"/>
</dbReference>
<dbReference type="SUPFAM" id="SSF52129">
    <property type="entry name" value="Caspase-like"/>
    <property type="match status" value="1"/>
</dbReference>